<accession>B7VI66</accession>
<sequence length="75" mass="8843">MARFFRRRKFCRFTAEGVQEIDYKDVATLKNYITEAGKIVPSRITGTSAKYQRQLARAIKRSRYLALLPYTDKHQ</sequence>
<feature type="chain" id="PRO_1000196539" description="Small ribosomal subunit protein bS18">
    <location>
        <begin position="1"/>
        <end position="75"/>
    </location>
</feature>
<name>RS18_VIBA3</name>
<keyword id="KW-0687">Ribonucleoprotein</keyword>
<keyword id="KW-0689">Ribosomal protein</keyword>
<keyword id="KW-0694">RNA-binding</keyword>
<keyword id="KW-0699">rRNA-binding</keyword>
<organism>
    <name type="scientific">Vibrio atlanticus (strain LGP32)</name>
    <name type="common">Vibrio splendidus (strain Mel32)</name>
    <dbReference type="NCBI Taxonomy" id="575788"/>
    <lineage>
        <taxon>Bacteria</taxon>
        <taxon>Pseudomonadati</taxon>
        <taxon>Pseudomonadota</taxon>
        <taxon>Gammaproteobacteria</taxon>
        <taxon>Vibrionales</taxon>
        <taxon>Vibrionaceae</taxon>
        <taxon>Vibrio</taxon>
    </lineage>
</organism>
<reference key="1">
    <citation type="submission" date="2009-02" db="EMBL/GenBank/DDBJ databases">
        <title>Vibrio splendidus str. LGP32 complete genome.</title>
        <authorList>
            <person name="Mazel D."/>
            <person name="Le Roux F."/>
        </authorList>
    </citation>
    <scope>NUCLEOTIDE SEQUENCE [LARGE SCALE GENOMIC DNA]</scope>
    <source>
        <strain>LGP32</strain>
    </source>
</reference>
<dbReference type="EMBL" id="FM954972">
    <property type="protein sequence ID" value="CAV17303.1"/>
    <property type="molecule type" value="Genomic_DNA"/>
</dbReference>
<dbReference type="SMR" id="B7VI66"/>
<dbReference type="STRING" id="575788.VS_0281"/>
<dbReference type="KEGG" id="vsp:VS_0281"/>
<dbReference type="eggNOG" id="COG0238">
    <property type="taxonomic scope" value="Bacteria"/>
</dbReference>
<dbReference type="HOGENOM" id="CLU_148710_2_3_6"/>
<dbReference type="Proteomes" id="UP000009100">
    <property type="component" value="Chromosome 1"/>
</dbReference>
<dbReference type="GO" id="GO:0022627">
    <property type="term" value="C:cytosolic small ribosomal subunit"/>
    <property type="evidence" value="ECO:0007669"/>
    <property type="project" value="TreeGrafter"/>
</dbReference>
<dbReference type="GO" id="GO:0070181">
    <property type="term" value="F:small ribosomal subunit rRNA binding"/>
    <property type="evidence" value="ECO:0007669"/>
    <property type="project" value="TreeGrafter"/>
</dbReference>
<dbReference type="GO" id="GO:0003735">
    <property type="term" value="F:structural constituent of ribosome"/>
    <property type="evidence" value="ECO:0007669"/>
    <property type="project" value="InterPro"/>
</dbReference>
<dbReference type="GO" id="GO:0006412">
    <property type="term" value="P:translation"/>
    <property type="evidence" value="ECO:0007669"/>
    <property type="project" value="UniProtKB-UniRule"/>
</dbReference>
<dbReference type="FunFam" id="4.10.640.10:FF:000001">
    <property type="entry name" value="30S ribosomal protein S18"/>
    <property type="match status" value="1"/>
</dbReference>
<dbReference type="Gene3D" id="4.10.640.10">
    <property type="entry name" value="Ribosomal protein S18"/>
    <property type="match status" value="1"/>
</dbReference>
<dbReference type="HAMAP" id="MF_00270">
    <property type="entry name" value="Ribosomal_bS18"/>
    <property type="match status" value="1"/>
</dbReference>
<dbReference type="InterPro" id="IPR001648">
    <property type="entry name" value="Ribosomal_bS18"/>
</dbReference>
<dbReference type="InterPro" id="IPR018275">
    <property type="entry name" value="Ribosomal_bS18_CS"/>
</dbReference>
<dbReference type="InterPro" id="IPR036870">
    <property type="entry name" value="Ribosomal_bS18_sf"/>
</dbReference>
<dbReference type="NCBIfam" id="TIGR00165">
    <property type="entry name" value="S18"/>
    <property type="match status" value="1"/>
</dbReference>
<dbReference type="PANTHER" id="PTHR13479">
    <property type="entry name" value="30S RIBOSOMAL PROTEIN S18"/>
    <property type="match status" value="1"/>
</dbReference>
<dbReference type="PANTHER" id="PTHR13479:SF40">
    <property type="entry name" value="SMALL RIBOSOMAL SUBUNIT PROTEIN BS18M"/>
    <property type="match status" value="1"/>
</dbReference>
<dbReference type="Pfam" id="PF01084">
    <property type="entry name" value="Ribosomal_S18"/>
    <property type="match status" value="1"/>
</dbReference>
<dbReference type="PRINTS" id="PR00974">
    <property type="entry name" value="RIBOSOMALS18"/>
</dbReference>
<dbReference type="SUPFAM" id="SSF46911">
    <property type="entry name" value="Ribosomal protein S18"/>
    <property type="match status" value="1"/>
</dbReference>
<dbReference type="PROSITE" id="PS00057">
    <property type="entry name" value="RIBOSOMAL_S18"/>
    <property type="match status" value="1"/>
</dbReference>
<protein>
    <recommendedName>
        <fullName evidence="1">Small ribosomal subunit protein bS18</fullName>
    </recommendedName>
    <alternativeName>
        <fullName evidence="2">30S ribosomal protein S18</fullName>
    </alternativeName>
</protein>
<gene>
    <name evidence="1" type="primary">rpsR</name>
    <name type="ordered locus">VS_0281</name>
</gene>
<comment type="function">
    <text evidence="1">Binds as a heterodimer with protein bS6 to the central domain of the 16S rRNA, where it helps stabilize the platform of the 30S subunit.</text>
</comment>
<comment type="subunit">
    <text evidence="1">Part of the 30S ribosomal subunit. Forms a tight heterodimer with protein bS6.</text>
</comment>
<comment type="similarity">
    <text evidence="1">Belongs to the bacterial ribosomal protein bS18 family.</text>
</comment>
<evidence type="ECO:0000255" key="1">
    <source>
        <dbReference type="HAMAP-Rule" id="MF_00270"/>
    </source>
</evidence>
<evidence type="ECO:0000305" key="2"/>
<proteinExistence type="inferred from homology"/>